<reference key="1">
    <citation type="journal article" date="2010" name="J. Bacteriol.">
        <title>Genome sequence of the deep-rooted Yersinia pestis strain Angola reveals new insights into the evolution and pangenome of the plague bacterium.</title>
        <authorList>
            <person name="Eppinger M."/>
            <person name="Worsham P.L."/>
            <person name="Nikolich M.P."/>
            <person name="Riley D.R."/>
            <person name="Sebastian Y."/>
            <person name="Mou S."/>
            <person name="Achtman M."/>
            <person name="Lindler L.E."/>
            <person name="Ravel J."/>
        </authorList>
    </citation>
    <scope>NUCLEOTIDE SEQUENCE [LARGE SCALE GENOMIC DNA]</scope>
    <source>
        <strain>Angola</strain>
    </source>
</reference>
<gene>
    <name evidence="1" type="primary">rpsM</name>
    <name type="ordered locus">YpAngola_A0603</name>
</gene>
<organism>
    <name type="scientific">Yersinia pestis bv. Antiqua (strain Angola)</name>
    <dbReference type="NCBI Taxonomy" id="349746"/>
    <lineage>
        <taxon>Bacteria</taxon>
        <taxon>Pseudomonadati</taxon>
        <taxon>Pseudomonadota</taxon>
        <taxon>Gammaproteobacteria</taxon>
        <taxon>Enterobacterales</taxon>
        <taxon>Yersiniaceae</taxon>
        <taxon>Yersinia</taxon>
    </lineage>
</organism>
<protein>
    <recommendedName>
        <fullName evidence="1">Small ribosomal subunit protein uS13</fullName>
    </recommendedName>
    <alternativeName>
        <fullName evidence="3">30S ribosomal protein S13</fullName>
    </alternativeName>
</protein>
<sequence>MARIAGINIPDQKHTVIALTAIFGIGKTRSQAICVAAGIAEHVKISELSEEQIEKLRDEVAKYVVEGDLRREVTLSIKRLMDLGTYRGLRHRRGLPVRGQRTKTNARTRKGPRKPIKK</sequence>
<dbReference type="EMBL" id="CP000901">
    <property type="protein sequence ID" value="ABX86167.1"/>
    <property type="molecule type" value="Genomic_DNA"/>
</dbReference>
<dbReference type="RefSeq" id="WP_002213346.1">
    <property type="nucleotide sequence ID" value="NZ_CP009935.1"/>
</dbReference>
<dbReference type="SMR" id="A9R915"/>
<dbReference type="GeneID" id="96663174"/>
<dbReference type="KEGG" id="ypg:YpAngola_A0603"/>
<dbReference type="PATRIC" id="fig|349746.12.peg.1555"/>
<dbReference type="GO" id="GO:0005829">
    <property type="term" value="C:cytosol"/>
    <property type="evidence" value="ECO:0007669"/>
    <property type="project" value="TreeGrafter"/>
</dbReference>
<dbReference type="GO" id="GO:0015935">
    <property type="term" value="C:small ribosomal subunit"/>
    <property type="evidence" value="ECO:0007669"/>
    <property type="project" value="TreeGrafter"/>
</dbReference>
<dbReference type="GO" id="GO:0019843">
    <property type="term" value="F:rRNA binding"/>
    <property type="evidence" value="ECO:0007669"/>
    <property type="project" value="UniProtKB-UniRule"/>
</dbReference>
<dbReference type="GO" id="GO:0003735">
    <property type="term" value="F:structural constituent of ribosome"/>
    <property type="evidence" value="ECO:0007669"/>
    <property type="project" value="InterPro"/>
</dbReference>
<dbReference type="GO" id="GO:0000049">
    <property type="term" value="F:tRNA binding"/>
    <property type="evidence" value="ECO:0007669"/>
    <property type="project" value="UniProtKB-UniRule"/>
</dbReference>
<dbReference type="GO" id="GO:0006412">
    <property type="term" value="P:translation"/>
    <property type="evidence" value="ECO:0007669"/>
    <property type="project" value="UniProtKB-UniRule"/>
</dbReference>
<dbReference type="FunFam" id="1.10.8.50:FF:000001">
    <property type="entry name" value="30S ribosomal protein S13"/>
    <property type="match status" value="1"/>
</dbReference>
<dbReference type="FunFam" id="4.10.910.10:FF:000001">
    <property type="entry name" value="30S ribosomal protein S13"/>
    <property type="match status" value="1"/>
</dbReference>
<dbReference type="Gene3D" id="1.10.8.50">
    <property type="match status" value="1"/>
</dbReference>
<dbReference type="Gene3D" id="4.10.910.10">
    <property type="entry name" value="30s ribosomal protein s13, domain 2"/>
    <property type="match status" value="1"/>
</dbReference>
<dbReference type="HAMAP" id="MF_01315">
    <property type="entry name" value="Ribosomal_uS13"/>
    <property type="match status" value="1"/>
</dbReference>
<dbReference type="InterPro" id="IPR027437">
    <property type="entry name" value="Rbsml_uS13_C"/>
</dbReference>
<dbReference type="InterPro" id="IPR001892">
    <property type="entry name" value="Ribosomal_uS13"/>
</dbReference>
<dbReference type="InterPro" id="IPR010979">
    <property type="entry name" value="Ribosomal_uS13-like_H2TH"/>
</dbReference>
<dbReference type="InterPro" id="IPR019980">
    <property type="entry name" value="Ribosomal_uS13_bac-type"/>
</dbReference>
<dbReference type="InterPro" id="IPR018269">
    <property type="entry name" value="Ribosomal_uS13_CS"/>
</dbReference>
<dbReference type="NCBIfam" id="TIGR03631">
    <property type="entry name" value="uS13_bact"/>
    <property type="match status" value="1"/>
</dbReference>
<dbReference type="PANTHER" id="PTHR10871">
    <property type="entry name" value="30S RIBOSOMAL PROTEIN S13/40S RIBOSOMAL PROTEIN S18"/>
    <property type="match status" value="1"/>
</dbReference>
<dbReference type="PANTHER" id="PTHR10871:SF1">
    <property type="entry name" value="SMALL RIBOSOMAL SUBUNIT PROTEIN US13M"/>
    <property type="match status" value="1"/>
</dbReference>
<dbReference type="Pfam" id="PF00416">
    <property type="entry name" value="Ribosomal_S13"/>
    <property type="match status" value="1"/>
</dbReference>
<dbReference type="PIRSF" id="PIRSF002134">
    <property type="entry name" value="Ribosomal_S13"/>
    <property type="match status" value="1"/>
</dbReference>
<dbReference type="SUPFAM" id="SSF46946">
    <property type="entry name" value="S13-like H2TH domain"/>
    <property type="match status" value="1"/>
</dbReference>
<dbReference type="PROSITE" id="PS00646">
    <property type="entry name" value="RIBOSOMAL_S13_1"/>
    <property type="match status" value="1"/>
</dbReference>
<dbReference type="PROSITE" id="PS50159">
    <property type="entry name" value="RIBOSOMAL_S13_2"/>
    <property type="match status" value="1"/>
</dbReference>
<proteinExistence type="inferred from homology"/>
<comment type="function">
    <text evidence="1">Located at the top of the head of the 30S subunit, it contacts several helices of the 16S rRNA. In the 70S ribosome it contacts the 23S rRNA (bridge B1a) and protein L5 of the 50S subunit (bridge B1b), connecting the 2 subunits; these bridges are implicated in subunit movement. Contacts the tRNAs in the A and P-sites.</text>
</comment>
<comment type="subunit">
    <text evidence="1">Part of the 30S ribosomal subunit. Forms a loose heterodimer with protein S19. Forms two bridges to the 50S subunit in the 70S ribosome.</text>
</comment>
<comment type="similarity">
    <text evidence="1">Belongs to the universal ribosomal protein uS13 family.</text>
</comment>
<keyword id="KW-0687">Ribonucleoprotein</keyword>
<keyword id="KW-0689">Ribosomal protein</keyword>
<keyword id="KW-0694">RNA-binding</keyword>
<keyword id="KW-0699">rRNA-binding</keyword>
<keyword id="KW-0820">tRNA-binding</keyword>
<evidence type="ECO:0000255" key="1">
    <source>
        <dbReference type="HAMAP-Rule" id="MF_01315"/>
    </source>
</evidence>
<evidence type="ECO:0000256" key="2">
    <source>
        <dbReference type="SAM" id="MobiDB-lite"/>
    </source>
</evidence>
<evidence type="ECO:0000305" key="3"/>
<accession>A9R915</accession>
<feature type="chain" id="PRO_1000141335" description="Small ribosomal subunit protein uS13">
    <location>
        <begin position="1"/>
        <end position="118"/>
    </location>
</feature>
<feature type="region of interest" description="Disordered" evidence="2">
    <location>
        <begin position="92"/>
        <end position="118"/>
    </location>
</feature>
<name>RS13_YERPG</name>